<accession>A0Q345</accession>
<feature type="chain" id="PRO_1000046856" description="Cobalt-precorrin-5B C(1)-methyltransferase">
    <location>
        <begin position="1"/>
        <end position="358"/>
    </location>
</feature>
<proteinExistence type="inferred from homology"/>
<gene>
    <name evidence="1" type="primary">cbiD</name>
    <name type="ordered locus">NT01CX_0581</name>
</gene>
<name>CBID_CLONN</name>
<organism>
    <name type="scientific">Clostridium novyi (strain NT)</name>
    <dbReference type="NCBI Taxonomy" id="386415"/>
    <lineage>
        <taxon>Bacteria</taxon>
        <taxon>Bacillati</taxon>
        <taxon>Bacillota</taxon>
        <taxon>Clostridia</taxon>
        <taxon>Eubacteriales</taxon>
        <taxon>Clostridiaceae</taxon>
        <taxon>Clostridium</taxon>
    </lineage>
</organism>
<keyword id="KW-0169">Cobalamin biosynthesis</keyword>
<keyword id="KW-0489">Methyltransferase</keyword>
<keyword id="KW-1185">Reference proteome</keyword>
<keyword id="KW-0949">S-adenosyl-L-methionine</keyword>
<keyword id="KW-0808">Transferase</keyword>
<evidence type="ECO:0000255" key="1">
    <source>
        <dbReference type="HAMAP-Rule" id="MF_00787"/>
    </source>
</evidence>
<dbReference type="EC" id="2.1.1.195" evidence="1"/>
<dbReference type="EMBL" id="CP000382">
    <property type="protein sequence ID" value="ABK61369.1"/>
    <property type="molecule type" value="Genomic_DNA"/>
</dbReference>
<dbReference type="RefSeq" id="WP_011723026.1">
    <property type="nucleotide sequence ID" value="NC_008593.1"/>
</dbReference>
<dbReference type="SMR" id="A0Q345"/>
<dbReference type="STRING" id="386415.NT01CX_0581"/>
<dbReference type="KEGG" id="cno:NT01CX_0581"/>
<dbReference type="PATRIC" id="fig|386415.7.peg.2085"/>
<dbReference type="eggNOG" id="COG1903">
    <property type="taxonomic scope" value="Bacteria"/>
</dbReference>
<dbReference type="HOGENOM" id="CLU_041273_1_0_9"/>
<dbReference type="UniPathway" id="UPA00148">
    <property type="reaction ID" value="UER00227"/>
</dbReference>
<dbReference type="Proteomes" id="UP000008220">
    <property type="component" value="Chromosome"/>
</dbReference>
<dbReference type="GO" id="GO:0043780">
    <property type="term" value="F:cobalt-precorrin-5B C1-methyltransferase activity"/>
    <property type="evidence" value="ECO:0007669"/>
    <property type="project" value="RHEA"/>
</dbReference>
<dbReference type="GO" id="GO:0019251">
    <property type="term" value="P:anaerobic cobalamin biosynthetic process"/>
    <property type="evidence" value="ECO:0007669"/>
    <property type="project" value="UniProtKB-UniRule"/>
</dbReference>
<dbReference type="GO" id="GO:0032259">
    <property type="term" value="P:methylation"/>
    <property type="evidence" value="ECO:0007669"/>
    <property type="project" value="UniProtKB-KW"/>
</dbReference>
<dbReference type="Gene3D" id="3.30.2110.10">
    <property type="entry name" value="CbiD-like"/>
    <property type="match status" value="1"/>
</dbReference>
<dbReference type="HAMAP" id="MF_00787">
    <property type="entry name" value="CbiD"/>
    <property type="match status" value="1"/>
</dbReference>
<dbReference type="InterPro" id="IPR002748">
    <property type="entry name" value="CbiD"/>
</dbReference>
<dbReference type="InterPro" id="IPR036074">
    <property type="entry name" value="CbiD_sf"/>
</dbReference>
<dbReference type="NCBIfam" id="TIGR00312">
    <property type="entry name" value="cbiD"/>
    <property type="match status" value="1"/>
</dbReference>
<dbReference type="PANTHER" id="PTHR35863">
    <property type="entry name" value="COBALT-PRECORRIN-5B C(1)-METHYLTRANSFERASE"/>
    <property type="match status" value="1"/>
</dbReference>
<dbReference type="PANTHER" id="PTHR35863:SF1">
    <property type="entry name" value="COBALT-PRECORRIN-5B C(1)-METHYLTRANSFERASE"/>
    <property type="match status" value="1"/>
</dbReference>
<dbReference type="Pfam" id="PF01888">
    <property type="entry name" value="CbiD"/>
    <property type="match status" value="1"/>
</dbReference>
<dbReference type="PIRSF" id="PIRSF026782">
    <property type="entry name" value="CbiD"/>
    <property type="match status" value="1"/>
</dbReference>
<dbReference type="SUPFAM" id="SSF111342">
    <property type="entry name" value="CbiD-like"/>
    <property type="match status" value="1"/>
</dbReference>
<sequence>MFEMYVDCDGKKLRCGYTTGSCAAAAAKAATRMLYYGGKLEKITIDIPKGIEITVPIGNIEVGEDYVKCSVTKFSGDDPDITNGIEIYATARKIESGYSLKGGKGVGVVMGEGLYVKKGEPAINPVPRQMIQKEVMEIVPKDKGIEITISVPKGEEIAKKTFNPRLNIEGGISILGTTGIVTPMSEDALKESIALEIKQKYASGVTRPVLVFGNMGEERAKALGFNKNDMIIVSNYIGYALDICRQKEIKSIALVGHIGKMCKIASGCFQTHSRVCDVRMETIALELALMNAPFHIVNEVYNMKTTEGAVKFLEDKYSEVYLRIAQKIKSRIYTYTYDTIDAEIVMFSMEKGVIARVN</sequence>
<comment type="function">
    <text evidence="1">Catalyzes the methylation of C-1 in cobalt-precorrin-5B to form cobalt-precorrin-6A.</text>
</comment>
<comment type="catalytic activity">
    <reaction evidence="1">
        <text>Co-precorrin-5B + S-adenosyl-L-methionine = Co-precorrin-6A + S-adenosyl-L-homocysteine</text>
        <dbReference type="Rhea" id="RHEA:26285"/>
        <dbReference type="ChEBI" id="CHEBI:57856"/>
        <dbReference type="ChEBI" id="CHEBI:59789"/>
        <dbReference type="ChEBI" id="CHEBI:60063"/>
        <dbReference type="ChEBI" id="CHEBI:60064"/>
        <dbReference type="EC" id="2.1.1.195"/>
    </reaction>
</comment>
<comment type="pathway">
    <text evidence="1">Cofactor biosynthesis; adenosylcobalamin biosynthesis; cob(II)yrinate a,c-diamide from sirohydrochlorin (anaerobic route): step 6/10.</text>
</comment>
<comment type="similarity">
    <text evidence="1">Belongs to the CbiD family.</text>
</comment>
<reference key="1">
    <citation type="journal article" date="2006" name="Nat. Biotechnol.">
        <title>The genome and transcriptomes of the anti-tumor agent Clostridium novyi-NT.</title>
        <authorList>
            <person name="Bettegowda C."/>
            <person name="Huang X."/>
            <person name="Lin J."/>
            <person name="Cheong I."/>
            <person name="Kohli M."/>
            <person name="Szabo S.A."/>
            <person name="Zhang X."/>
            <person name="Diaz L.A. Jr."/>
            <person name="Velculescu V.E."/>
            <person name="Parmigiani G."/>
            <person name="Kinzler K.W."/>
            <person name="Vogelstein B."/>
            <person name="Zhou S."/>
        </authorList>
    </citation>
    <scope>NUCLEOTIDE SEQUENCE [LARGE SCALE GENOMIC DNA]</scope>
    <source>
        <strain>NT</strain>
    </source>
</reference>
<protein>
    <recommendedName>
        <fullName evidence="1">Cobalt-precorrin-5B C(1)-methyltransferase</fullName>
        <ecNumber evidence="1">2.1.1.195</ecNumber>
    </recommendedName>
    <alternativeName>
        <fullName evidence="1">Cobalt-precorrin-6A synthase</fullName>
    </alternativeName>
</protein>